<gene>
    <name evidence="1" type="primary">rnfG</name>
    <name type="ordered locus">swp_2366</name>
</gene>
<comment type="function">
    <text evidence="1">Part of a membrane-bound complex that couples electron transfer with translocation of ions across the membrane.</text>
</comment>
<comment type="cofactor">
    <cofactor evidence="1">
        <name>FMN</name>
        <dbReference type="ChEBI" id="CHEBI:58210"/>
    </cofactor>
</comment>
<comment type="subunit">
    <text evidence="1">The complex is composed of six subunits: RnfA, RnfB, RnfC, RnfD, RnfE and RnfG.</text>
</comment>
<comment type="subcellular location">
    <subcellularLocation>
        <location evidence="1">Cell inner membrane</location>
        <topology evidence="1">Single-pass membrane protein</topology>
    </subcellularLocation>
</comment>
<comment type="similarity">
    <text evidence="1">Belongs to the RnfG family.</text>
</comment>
<accession>B8CM54</accession>
<proteinExistence type="inferred from homology"/>
<feature type="chain" id="PRO_1000125875" description="Ion-translocating oxidoreductase complex subunit G">
    <location>
        <begin position="1"/>
        <end position="212"/>
    </location>
</feature>
<feature type="transmembrane region" description="Helical" evidence="1">
    <location>
        <begin position="9"/>
        <end position="29"/>
    </location>
</feature>
<feature type="modified residue" description="FMN phosphoryl threonine" evidence="1">
    <location>
        <position position="176"/>
    </location>
</feature>
<protein>
    <recommendedName>
        <fullName evidence="1">Ion-translocating oxidoreductase complex subunit G</fullName>
        <ecNumber evidence="1">7.-.-.-</ecNumber>
    </recommendedName>
    <alternativeName>
        <fullName evidence="1">Rnf electron transport complex subunit G</fullName>
    </alternativeName>
</protein>
<name>RNFG_SHEPW</name>
<keyword id="KW-0997">Cell inner membrane</keyword>
<keyword id="KW-1003">Cell membrane</keyword>
<keyword id="KW-0249">Electron transport</keyword>
<keyword id="KW-0285">Flavoprotein</keyword>
<keyword id="KW-0288">FMN</keyword>
<keyword id="KW-0472">Membrane</keyword>
<keyword id="KW-0597">Phosphoprotein</keyword>
<keyword id="KW-1278">Translocase</keyword>
<keyword id="KW-0812">Transmembrane</keyword>
<keyword id="KW-1133">Transmembrane helix</keyword>
<keyword id="KW-0813">Transport</keyword>
<sequence length="212" mass="23336">MKKSMLKNGLLLGLFALLCTGLVAIVNQLTYAKIKQQEQIELSRVLHQIIPDEIHDNELTEHCITIQDSDFLGTTQPLPAYIATRNGDGVAIAIETVAPDGYNGNIKIIIGLNKAGEVLGVRTLSHQETPGLGDKIELRKSDWVTKFNGLTVSSEKDKRWHVKKDGGQIDQFTGATITPRAYVNAVKLATLYFNEHKQKLLSAPASCEVDNE</sequence>
<reference key="1">
    <citation type="journal article" date="2008" name="PLoS ONE">
        <title>Environmental adaptation: genomic analysis of the piezotolerant and psychrotolerant deep-sea iron reducing bacterium Shewanella piezotolerans WP3.</title>
        <authorList>
            <person name="Wang F."/>
            <person name="Wang J."/>
            <person name="Jian H."/>
            <person name="Zhang B."/>
            <person name="Li S."/>
            <person name="Wang F."/>
            <person name="Zeng X."/>
            <person name="Gao L."/>
            <person name="Bartlett D.H."/>
            <person name="Yu J."/>
            <person name="Hu S."/>
            <person name="Xiao X."/>
        </authorList>
    </citation>
    <scope>NUCLEOTIDE SEQUENCE [LARGE SCALE GENOMIC DNA]</scope>
    <source>
        <strain>WP3 / JCM 13877</strain>
    </source>
</reference>
<organism>
    <name type="scientific">Shewanella piezotolerans (strain WP3 / JCM 13877)</name>
    <dbReference type="NCBI Taxonomy" id="225849"/>
    <lineage>
        <taxon>Bacteria</taxon>
        <taxon>Pseudomonadati</taxon>
        <taxon>Pseudomonadota</taxon>
        <taxon>Gammaproteobacteria</taxon>
        <taxon>Alteromonadales</taxon>
        <taxon>Shewanellaceae</taxon>
        <taxon>Shewanella</taxon>
    </lineage>
</organism>
<dbReference type="EC" id="7.-.-.-" evidence="1"/>
<dbReference type="EMBL" id="CP000472">
    <property type="protein sequence ID" value="ACJ29111.1"/>
    <property type="molecule type" value="Genomic_DNA"/>
</dbReference>
<dbReference type="SMR" id="B8CM54"/>
<dbReference type="STRING" id="225849.swp_2366"/>
<dbReference type="KEGG" id="swp:swp_2366"/>
<dbReference type="eggNOG" id="COG4659">
    <property type="taxonomic scope" value="Bacteria"/>
</dbReference>
<dbReference type="HOGENOM" id="CLU_077882_1_0_6"/>
<dbReference type="Proteomes" id="UP000000753">
    <property type="component" value="Chromosome"/>
</dbReference>
<dbReference type="GO" id="GO:0005886">
    <property type="term" value="C:plasma membrane"/>
    <property type="evidence" value="ECO:0007669"/>
    <property type="project" value="UniProtKB-SubCell"/>
</dbReference>
<dbReference type="GO" id="GO:0009055">
    <property type="term" value="F:electron transfer activity"/>
    <property type="evidence" value="ECO:0007669"/>
    <property type="project" value="InterPro"/>
</dbReference>
<dbReference type="GO" id="GO:0010181">
    <property type="term" value="F:FMN binding"/>
    <property type="evidence" value="ECO:0007669"/>
    <property type="project" value="InterPro"/>
</dbReference>
<dbReference type="GO" id="GO:0022900">
    <property type="term" value="P:electron transport chain"/>
    <property type="evidence" value="ECO:0007669"/>
    <property type="project" value="UniProtKB-UniRule"/>
</dbReference>
<dbReference type="HAMAP" id="MF_00479">
    <property type="entry name" value="RsxG_RnfG"/>
    <property type="match status" value="1"/>
</dbReference>
<dbReference type="InterPro" id="IPR007329">
    <property type="entry name" value="FMN-bd"/>
</dbReference>
<dbReference type="InterPro" id="IPR010209">
    <property type="entry name" value="Ion_transpt_RnfG/RsxG"/>
</dbReference>
<dbReference type="NCBIfam" id="NF002519">
    <property type="entry name" value="PRK01908.1"/>
    <property type="match status" value="1"/>
</dbReference>
<dbReference type="NCBIfam" id="TIGR01947">
    <property type="entry name" value="rnfG"/>
    <property type="match status" value="1"/>
</dbReference>
<dbReference type="PANTHER" id="PTHR36118">
    <property type="entry name" value="ION-TRANSLOCATING OXIDOREDUCTASE COMPLEX SUBUNIT G"/>
    <property type="match status" value="1"/>
</dbReference>
<dbReference type="PANTHER" id="PTHR36118:SF1">
    <property type="entry name" value="ION-TRANSLOCATING OXIDOREDUCTASE COMPLEX SUBUNIT G"/>
    <property type="match status" value="1"/>
</dbReference>
<dbReference type="Pfam" id="PF04205">
    <property type="entry name" value="FMN_bind"/>
    <property type="match status" value="1"/>
</dbReference>
<dbReference type="PIRSF" id="PIRSF006091">
    <property type="entry name" value="E_trnsport_RnfG"/>
    <property type="match status" value="1"/>
</dbReference>
<dbReference type="SMART" id="SM00900">
    <property type="entry name" value="FMN_bind"/>
    <property type="match status" value="1"/>
</dbReference>
<evidence type="ECO:0000255" key="1">
    <source>
        <dbReference type="HAMAP-Rule" id="MF_00479"/>
    </source>
</evidence>